<evidence type="ECO:0000250" key="1"/>
<evidence type="ECO:0000250" key="2">
    <source>
        <dbReference type="UniProtKB" id="P00157"/>
    </source>
</evidence>
<evidence type="ECO:0000255" key="3">
    <source>
        <dbReference type="PROSITE-ProRule" id="PRU00967"/>
    </source>
</evidence>
<evidence type="ECO:0000255" key="4">
    <source>
        <dbReference type="PROSITE-ProRule" id="PRU00968"/>
    </source>
</evidence>
<geneLocation type="mitochondrion"/>
<feature type="chain" id="PRO_0000061112" description="Cytochrome b">
    <location>
        <begin position="1"/>
        <end position="379"/>
    </location>
</feature>
<feature type="transmembrane region" description="Helical" evidence="2">
    <location>
        <begin position="33"/>
        <end position="53"/>
    </location>
</feature>
<feature type="transmembrane region" description="Helical" evidence="2">
    <location>
        <begin position="77"/>
        <end position="98"/>
    </location>
</feature>
<feature type="transmembrane region" description="Helical" evidence="2">
    <location>
        <begin position="113"/>
        <end position="133"/>
    </location>
</feature>
<feature type="transmembrane region" description="Helical" evidence="2">
    <location>
        <begin position="178"/>
        <end position="198"/>
    </location>
</feature>
<feature type="transmembrane region" description="Helical" evidence="2">
    <location>
        <begin position="226"/>
        <end position="246"/>
    </location>
</feature>
<feature type="transmembrane region" description="Helical" evidence="2">
    <location>
        <begin position="288"/>
        <end position="308"/>
    </location>
</feature>
<feature type="transmembrane region" description="Helical" evidence="2">
    <location>
        <begin position="320"/>
        <end position="340"/>
    </location>
</feature>
<feature type="transmembrane region" description="Helical" evidence="2">
    <location>
        <begin position="347"/>
        <end position="367"/>
    </location>
</feature>
<feature type="binding site" description="axial binding residue" evidence="2">
    <location>
        <position position="83"/>
    </location>
    <ligand>
        <name>heme b</name>
        <dbReference type="ChEBI" id="CHEBI:60344"/>
        <label>b562</label>
    </ligand>
    <ligandPart>
        <name>Fe</name>
        <dbReference type="ChEBI" id="CHEBI:18248"/>
    </ligandPart>
</feature>
<feature type="binding site" description="axial binding residue" evidence="2">
    <location>
        <position position="97"/>
    </location>
    <ligand>
        <name>heme b</name>
        <dbReference type="ChEBI" id="CHEBI:60344"/>
        <label>b566</label>
    </ligand>
    <ligandPart>
        <name>Fe</name>
        <dbReference type="ChEBI" id="CHEBI:18248"/>
    </ligandPart>
</feature>
<feature type="binding site" description="axial binding residue" evidence="2">
    <location>
        <position position="182"/>
    </location>
    <ligand>
        <name>heme b</name>
        <dbReference type="ChEBI" id="CHEBI:60344"/>
        <label>b562</label>
    </ligand>
    <ligandPart>
        <name>Fe</name>
        <dbReference type="ChEBI" id="CHEBI:18248"/>
    </ligandPart>
</feature>
<feature type="binding site" description="axial binding residue" evidence="2">
    <location>
        <position position="196"/>
    </location>
    <ligand>
        <name>heme b</name>
        <dbReference type="ChEBI" id="CHEBI:60344"/>
        <label>b566</label>
    </ligand>
    <ligandPart>
        <name>Fe</name>
        <dbReference type="ChEBI" id="CHEBI:18248"/>
    </ligandPart>
</feature>
<feature type="binding site" evidence="2">
    <location>
        <position position="201"/>
    </location>
    <ligand>
        <name>a ubiquinone</name>
        <dbReference type="ChEBI" id="CHEBI:16389"/>
    </ligand>
</feature>
<proteinExistence type="inferred from homology"/>
<organism>
    <name type="scientific">Lepus saxatilis</name>
    <name type="common">Scrub hare</name>
    <dbReference type="NCBI Taxonomy" id="63224"/>
    <lineage>
        <taxon>Eukaryota</taxon>
        <taxon>Metazoa</taxon>
        <taxon>Chordata</taxon>
        <taxon>Craniata</taxon>
        <taxon>Vertebrata</taxon>
        <taxon>Euteleostomi</taxon>
        <taxon>Mammalia</taxon>
        <taxon>Eutheria</taxon>
        <taxon>Euarchontoglires</taxon>
        <taxon>Glires</taxon>
        <taxon>Lagomorpha</taxon>
        <taxon>Leporidae</taxon>
        <taxon>Lepus</taxon>
    </lineage>
</organism>
<gene>
    <name type="primary">MT-CYB</name>
    <name type="synonym">COB</name>
    <name type="synonym">CYTB</name>
    <name type="synonym">MTCYB</name>
</gene>
<comment type="function">
    <text evidence="2">Component of the ubiquinol-cytochrome c reductase complex (complex III or cytochrome b-c1 complex) that is part of the mitochondrial respiratory chain. The b-c1 complex mediates electron transfer from ubiquinol to cytochrome c. Contributes to the generation of a proton gradient across the mitochondrial membrane that is then used for ATP synthesis.</text>
</comment>
<comment type="cofactor">
    <cofactor evidence="2">
        <name>heme b</name>
        <dbReference type="ChEBI" id="CHEBI:60344"/>
    </cofactor>
    <text evidence="2">Binds 2 heme b groups non-covalently.</text>
</comment>
<comment type="subunit">
    <text evidence="2">The cytochrome bc1 complex contains 11 subunits: 3 respiratory subunits (MT-CYB, CYC1 and UQCRFS1), 2 core proteins (UQCRC1 and UQCRC2) and 6 low-molecular weight proteins (UQCRH/QCR6, UQCRB/QCR7, UQCRQ/QCR8, UQCR10/QCR9, UQCR11/QCR10 and a cleavage product of UQCRFS1). This cytochrome bc1 complex then forms a dimer.</text>
</comment>
<comment type="subcellular location">
    <subcellularLocation>
        <location evidence="2">Mitochondrion inner membrane</location>
        <topology evidence="2">Multi-pass membrane protein</topology>
    </subcellularLocation>
</comment>
<comment type="miscellaneous">
    <text evidence="1">Heme 1 (or BL or b562) is low-potential and absorbs at about 562 nm, and heme 2 (or BH or b566) is high-potential and absorbs at about 566 nm.</text>
</comment>
<comment type="similarity">
    <text evidence="3 4">Belongs to the cytochrome b family.</text>
</comment>
<comment type="caution">
    <text evidence="2">The full-length protein contains only eight transmembrane helices, not nine as predicted by bioinformatics tools.</text>
</comment>
<keyword id="KW-0249">Electron transport</keyword>
<keyword id="KW-0349">Heme</keyword>
<keyword id="KW-0408">Iron</keyword>
<keyword id="KW-0472">Membrane</keyword>
<keyword id="KW-0479">Metal-binding</keyword>
<keyword id="KW-0496">Mitochondrion</keyword>
<keyword id="KW-0999">Mitochondrion inner membrane</keyword>
<keyword id="KW-0679">Respiratory chain</keyword>
<keyword id="KW-0812">Transmembrane</keyword>
<keyword id="KW-1133">Transmembrane helix</keyword>
<keyword id="KW-0813">Transport</keyword>
<keyword id="KW-0830">Ubiquinone</keyword>
<name>CYB_LEPSX</name>
<sequence>MTNIRKTHPLLKIVNHSLIDLPAPSNISTWWNFGSLLGLCLMIQILTGLFLAMHYTSDTATAFSSVTHICRDVNYGWLIRYLHANGASMFFICLYMHVGRGIYYGSYTYLETWNIGIILLFAVMATAFMGYVLPWGQMSFWGATVITNLLSAIPYIGTTLVEWIWGGFSVDKATLTRFFAFHFILPFIIAALVMIHLLFLHETGSNNPSGIPSDSDKIPFHPYYTIKDILGFLVLILLLMLLVLFSPDLLGDPDNYTPANPLNTPPHIKPEWYFLFAYAILRSIPNKLGGVLALVMSILILAVIPFLHMSKQRSMMFRPISQVLFWILVADLLTLTWIGGQPVEHPFIIIGQLASFLYFLLILVLMPVCSLIENKMLKW</sequence>
<dbReference type="EMBL" id="AY292730">
    <property type="protein sequence ID" value="AAS54926.1"/>
    <property type="molecule type" value="Genomic_DNA"/>
</dbReference>
<dbReference type="SMR" id="Q6ELV4"/>
<dbReference type="GO" id="GO:0005743">
    <property type="term" value="C:mitochondrial inner membrane"/>
    <property type="evidence" value="ECO:0007669"/>
    <property type="project" value="UniProtKB-SubCell"/>
</dbReference>
<dbReference type="GO" id="GO:0045275">
    <property type="term" value="C:respiratory chain complex III"/>
    <property type="evidence" value="ECO:0007669"/>
    <property type="project" value="InterPro"/>
</dbReference>
<dbReference type="GO" id="GO:0046872">
    <property type="term" value="F:metal ion binding"/>
    <property type="evidence" value="ECO:0007669"/>
    <property type="project" value="UniProtKB-KW"/>
</dbReference>
<dbReference type="GO" id="GO:0008121">
    <property type="term" value="F:ubiquinol-cytochrome-c reductase activity"/>
    <property type="evidence" value="ECO:0007669"/>
    <property type="project" value="InterPro"/>
</dbReference>
<dbReference type="GO" id="GO:0006122">
    <property type="term" value="P:mitochondrial electron transport, ubiquinol to cytochrome c"/>
    <property type="evidence" value="ECO:0007669"/>
    <property type="project" value="TreeGrafter"/>
</dbReference>
<dbReference type="CDD" id="cd00290">
    <property type="entry name" value="cytochrome_b_C"/>
    <property type="match status" value="1"/>
</dbReference>
<dbReference type="CDD" id="cd00284">
    <property type="entry name" value="Cytochrome_b_N"/>
    <property type="match status" value="1"/>
</dbReference>
<dbReference type="FunFam" id="1.20.810.10:FF:000002">
    <property type="entry name" value="Cytochrome b"/>
    <property type="match status" value="1"/>
</dbReference>
<dbReference type="Gene3D" id="1.20.810.10">
    <property type="entry name" value="Cytochrome Bc1 Complex, Chain C"/>
    <property type="match status" value="1"/>
</dbReference>
<dbReference type="InterPro" id="IPR005798">
    <property type="entry name" value="Cyt_b/b6_C"/>
</dbReference>
<dbReference type="InterPro" id="IPR036150">
    <property type="entry name" value="Cyt_b/b6_C_sf"/>
</dbReference>
<dbReference type="InterPro" id="IPR005797">
    <property type="entry name" value="Cyt_b/b6_N"/>
</dbReference>
<dbReference type="InterPro" id="IPR027387">
    <property type="entry name" value="Cytb/b6-like_sf"/>
</dbReference>
<dbReference type="InterPro" id="IPR030689">
    <property type="entry name" value="Cytochrome_b"/>
</dbReference>
<dbReference type="InterPro" id="IPR048260">
    <property type="entry name" value="Cytochrome_b_C_euk/bac"/>
</dbReference>
<dbReference type="InterPro" id="IPR048259">
    <property type="entry name" value="Cytochrome_b_N_euk/bac"/>
</dbReference>
<dbReference type="InterPro" id="IPR016174">
    <property type="entry name" value="Di-haem_cyt_TM"/>
</dbReference>
<dbReference type="PANTHER" id="PTHR19271">
    <property type="entry name" value="CYTOCHROME B"/>
    <property type="match status" value="1"/>
</dbReference>
<dbReference type="PANTHER" id="PTHR19271:SF16">
    <property type="entry name" value="CYTOCHROME B"/>
    <property type="match status" value="1"/>
</dbReference>
<dbReference type="Pfam" id="PF00032">
    <property type="entry name" value="Cytochrom_B_C"/>
    <property type="match status" value="1"/>
</dbReference>
<dbReference type="Pfam" id="PF00033">
    <property type="entry name" value="Cytochrome_B"/>
    <property type="match status" value="1"/>
</dbReference>
<dbReference type="PIRSF" id="PIRSF038885">
    <property type="entry name" value="COB"/>
    <property type="match status" value="1"/>
</dbReference>
<dbReference type="SUPFAM" id="SSF81648">
    <property type="entry name" value="a domain/subunit of cytochrome bc1 complex (Ubiquinol-cytochrome c reductase)"/>
    <property type="match status" value="1"/>
</dbReference>
<dbReference type="SUPFAM" id="SSF81342">
    <property type="entry name" value="Transmembrane di-heme cytochromes"/>
    <property type="match status" value="1"/>
</dbReference>
<dbReference type="PROSITE" id="PS51003">
    <property type="entry name" value="CYTB_CTER"/>
    <property type="match status" value="1"/>
</dbReference>
<dbReference type="PROSITE" id="PS51002">
    <property type="entry name" value="CYTB_NTER"/>
    <property type="match status" value="1"/>
</dbReference>
<accession>Q6ELV4</accession>
<protein>
    <recommendedName>
        <fullName>Cytochrome b</fullName>
    </recommendedName>
    <alternativeName>
        <fullName>Complex III subunit 3</fullName>
    </alternativeName>
    <alternativeName>
        <fullName>Complex III subunit III</fullName>
    </alternativeName>
    <alternativeName>
        <fullName>Cytochrome b-c1 complex subunit 3</fullName>
    </alternativeName>
    <alternativeName>
        <fullName>Ubiquinol-cytochrome-c reductase complex cytochrome b subunit</fullName>
    </alternativeName>
</protein>
<reference key="1">
    <citation type="journal article" date="2004" name="Syst. Biol.">
        <title>A molecular supermatrix of the rabbits and hares (Leporidae) allows for the identification of five intercontinental exchanges during the Miocene.</title>
        <authorList>
            <person name="Matthee C.A."/>
            <person name="van Vuuren B.J."/>
            <person name="Bell D."/>
            <person name="Robinson T.J."/>
        </authorList>
    </citation>
    <scope>NUCLEOTIDE SEQUENCE [GENOMIC DNA]</scope>
</reference>